<protein>
    <recommendedName>
        <fullName evidence="1">Cytidine deaminase</fullName>
        <ecNumber evidence="1">3.5.4.5</ecNumber>
    </recommendedName>
    <alternativeName>
        <fullName evidence="1">Cytidine aminohydrolase</fullName>
        <shortName evidence="1">CDA</shortName>
    </alternativeName>
</protein>
<accession>Q8FFV3</accession>
<reference key="1">
    <citation type="journal article" date="2002" name="Proc. Natl. Acad. Sci. U.S.A.">
        <title>Extensive mosaic structure revealed by the complete genome sequence of uropathogenic Escherichia coli.</title>
        <authorList>
            <person name="Welch R.A."/>
            <person name="Burland V."/>
            <person name="Plunkett G. III"/>
            <person name="Redford P."/>
            <person name="Roesch P."/>
            <person name="Rasko D."/>
            <person name="Buckles E.L."/>
            <person name="Liou S.-R."/>
            <person name="Boutin A."/>
            <person name="Hackett J."/>
            <person name="Stroud D."/>
            <person name="Mayhew G.F."/>
            <person name="Rose D.J."/>
            <person name="Zhou S."/>
            <person name="Schwartz D.C."/>
            <person name="Perna N.T."/>
            <person name="Mobley H.L.T."/>
            <person name="Donnenberg M.S."/>
            <person name="Blattner F.R."/>
        </authorList>
    </citation>
    <scope>NUCLEOTIDE SEQUENCE [LARGE SCALE GENOMIC DNA]</scope>
    <source>
        <strain>CFT073 / ATCC 700928 / UPEC</strain>
    </source>
</reference>
<proteinExistence type="inferred from homology"/>
<evidence type="ECO:0000255" key="1">
    <source>
        <dbReference type="HAMAP-Rule" id="MF_01558"/>
    </source>
</evidence>
<evidence type="ECO:0000255" key="2">
    <source>
        <dbReference type="PROSITE-ProRule" id="PRU01083"/>
    </source>
</evidence>
<feature type="chain" id="PRO_0000171651" description="Cytidine deaminase">
    <location>
        <begin position="1"/>
        <end position="294"/>
    </location>
</feature>
<feature type="domain" description="CMP/dCMP-type deaminase 1" evidence="2">
    <location>
        <begin position="48"/>
        <end position="168"/>
    </location>
</feature>
<feature type="domain" description="CMP/dCMP-type deaminase 2" evidence="2">
    <location>
        <begin position="186"/>
        <end position="294"/>
    </location>
</feature>
<feature type="active site" description="Proton donor" evidence="1">
    <location>
        <position position="104"/>
    </location>
</feature>
<feature type="binding site" evidence="1">
    <location>
        <begin position="89"/>
        <end position="91"/>
    </location>
    <ligand>
        <name>substrate</name>
    </ligand>
</feature>
<feature type="binding site" evidence="1">
    <location>
        <position position="102"/>
    </location>
    <ligand>
        <name>Zn(2+)</name>
        <dbReference type="ChEBI" id="CHEBI:29105"/>
        <note>catalytic</note>
    </ligand>
</feature>
<feature type="binding site" evidence="1">
    <location>
        <position position="129"/>
    </location>
    <ligand>
        <name>Zn(2+)</name>
        <dbReference type="ChEBI" id="CHEBI:29105"/>
        <note>catalytic</note>
    </ligand>
</feature>
<feature type="binding site" evidence="1">
    <location>
        <position position="132"/>
    </location>
    <ligand>
        <name>Zn(2+)</name>
        <dbReference type="ChEBI" id="CHEBI:29105"/>
        <note>catalytic</note>
    </ligand>
</feature>
<dbReference type="EC" id="3.5.4.5" evidence="1"/>
<dbReference type="EMBL" id="AE014075">
    <property type="protein sequence ID" value="AAN81131.1"/>
    <property type="molecule type" value="Genomic_DNA"/>
</dbReference>
<dbReference type="RefSeq" id="WP_000553553.1">
    <property type="nucleotide sequence ID" value="NZ_CP051263.1"/>
</dbReference>
<dbReference type="SMR" id="Q8FFV3"/>
<dbReference type="STRING" id="199310.c2675"/>
<dbReference type="KEGG" id="ecc:c2675"/>
<dbReference type="eggNOG" id="COG0295">
    <property type="taxonomic scope" value="Bacteria"/>
</dbReference>
<dbReference type="HOGENOM" id="CLU_052424_0_0_6"/>
<dbReference type="BioCyc" id="ECOL199310:C2675-MONOMER"/>
<dbReference type="Proteomes" id="UP000001410">
    <property type="component" value="Chromosome"/>
</dbReference>
<dbReference type="GO" id="GO:0005829">
    <property type="term" value="C:cytosol"/>
    <property type="evidence" value="ECO:0007669"/>
    <property type="project" value="TreeGrafter"/>
</dbReference>
<dbReference type="GO" id="GO:0004126">
    <property type="term" value="F:cytidine deaminase activity"/>
    <property type="evidence" value="ECO:0007669"/>
    <property type="project" value="UniProtKB-UniRule"/>
</dbReference>
<dbReference type="GO" id="GO:0042802">
    <property type="term" value="F:identical protein binding"/>
    <property type="evidence" value="ECO:0007669"/>
    <property type="project" value="UniProtKB-ARBA"/>
</dbReference>
<dbReference type="GO" id="GO:0008270">
    <property type="term" value="F:zinc ion binding"/>
    <property type="evidence" value="ECO:0007669"/>
    <property type="project" value="UniProtKB-UniRule"/>
</dbReference>
<dbReference type="GO" id="GO:0009972">
    <property type="term" value="P:cytidine deamination"/>
    <property type="evidence" value="ECO:0007669"/>
    <property type="project" value="InterPro"/>
</dbReference>
<dbReference type="CDD" id="cd01283">
    <property type="entry name" value="cytidine_deaminase"/>
    <property type="match status" value="2"/>
</dbReference>
<dbReference type="FunFam" id="3.40.140.10:FF:000006">
    <property type="entry name" value="Cytidine deaminase"/>
    <property type="match status" value="1"/>
</dbReference>
<dbReference type="FunFam" id="3.40.140.10:FF:000007">
    <property type="entry name" value="Cytidine deaminase"/>
    <property type="match status" value="1"/>
</dbReference>
<dbReference type="Gene3D" id="3.40.140.10">
    <property type="entry name" value="Cytidine Deaminase, domain 2"/>
    <property type="match status" value="2"/>
</dbReference>
<dbReference type="HAMAP" id="MF_01558">
    <property type="entry name" value="Cyt_deam"/>
    <property type="match status" value="1"/>
</dbReference>
<dbReference type="InterPro" id="IPR016192">
    <property type="entry name" value="APOBEC/CMP_deaminase_Zn-bd"/>
</dbReference>
<dbReference type="InterPro" id="IPR002125">
    <property type="entry name" value="CMP_dCMP_dom"/>
</dbReference>
<dbReference type="InterPro" id="IPR013171">
    <property type="entry name" value="Cyd/dCyd_deaminase_Zn-bd"/>
</dbReference>
<dbReference type="InterPro" id="IPR050202">
    <property type="entry name" value="Cyt/Deoxycyt_deaminase"/>
</dbReference>
<dbReference type="InterPro" id="IPR006263">
    <property type="entry name" value="Cyt_deam_dimer"/>
</dbReference>
<dbReference type="InterPro" id="IPR016193">
    <property type="entry name" value="Cytidine_deaminase-like"/>
</dbReference>
<dbReference type="InterPro" id="IPR020797">
    <property type="entry name" value="Cytidine_deaminase_bacteria"/>
</dbReference>
<dbReference type="NCBIfam" id="TIGR01355">
    <property type="entry name" value="cyt_deam_dimer"/>
    <property type="match status" value="1"/>
</dbReference>
<dbReference type="NCBIfam" id="NF006537">
    <property type="entry name" value="PRK09027.1"/>
    <property type="match status" value="1"/>
</dbReference>
<dbReference type="PANTHER" id="PTHR11644">
    <property type="entry name" value="CYTIDINE DEAMINASE"/>
    <property type="match status" value="1"/>
</dbReference>
<dbReference type="PANTHER" id="PTHR11644:SF2">
    <property type="entry name" value="CYTIDINE DEAMINASE"/>
    <property type="match status" value="1"/>
</dbReference>
<dbReference type="Pfam" id="PF00383">
    <property type="entry name" value="dCMP_cyt_deam_1"/>
    <property type="match status" value="1"/>
</dbReference>
<dbReference type="Pfam" id="PF08211">
    <property type="entry name" value="dCMP_cyt_deam_2"/>
    <property type="match status" value="1"/>
</dbReference>
<dbReference type="PIRSF" id="PIRSF006334">
    <property type="entry name" value="Cdd_plus_pseudo"/>
    <property type="match status" value="1"/>
</dbReference>
<dbReference type="SUPFAM" id="SSF53927">
    <property type="entry name" value="Cytidine deaminase-like"/>
    <property type="match status" value="2"/>
</dbReference>
<dbReference type="PROSITE" id="PS00903">
    <property type="entry name" value="CYT_DCMP_DEAMINASES_1"/>
    <property type="match status" value="1"/>
</dbReference>
<dbReference type="PROSITE" id="PS51747">
    <property type="entry name" value="CYT_DCMP_DEAMINASES_2"/>
    <property type="match status" value="2"/>
</dbReference>
<organism>
    <name type="scientific">Escherichia coli O6:H1 (strain CFT073 / ATCC 700928 / UPEC)</name>
    <dbReference type="NCBI Taxonomy" id="199310"/>
    <lineage>
        <taxon>Bacteria</taxon>
        <taxon>Pseudomonadati</taxon>
        <taxon>Pseudomonadota</taxon>
        <taxon>Gammaproteobacteria</taxon>
        <taxon>Enterobacterales</taxon>
        <taxon>Enterobacteriaceae</taxon>
        <taxon>Escherichia</taxon>
    </lineage>
</organism>
<comment type="function">
    <text evidence="1">This enzyme scavenges exogenous and endogenous cytidine and 2'-deoxycytidine for UMP synthesis.</text>
</comment>
<comment type="catalytic activity">
    <reaction evidence="1">
        <text>cytidine + H2O + H(+) = uridine + NH4(+)</text>
        <dbReference type="Rhea" id="RHEA:16069"/>
        <dbReference type="ChEBI" id="CHEBI:15377"/>
        <dbReference type="ChEBI" id="CHEBI:15378"/>
        <dbReference type="ChEBI" id="CHEBI:16704"/>
        <dbReference type="ChEBI" id="CHEBI:17562"/>
        <dbReference type="ChEBI" id="CHEBI:28938"/>
        <dbReference type="EC" id="3.5.4.5"/>
    </reaction>
</comment>
<comment type="catalytic activity">
    <reaction evidence="1">
        <text>2'-deoxycytidine + H2O + H(+) = 2'-deoxyuridine + NH4(+)</text>
        <dbReference type="Rhea" id="RHEA:13433"/>
        <dbReference type="ChEBI" id="CHEBI:15377"/>
        <dbReference type="ChEBI" id="CHEBI:15378"/>
        <dbReference type="ChEBI" id="CHEBI:15698"/>
        <dbReference type="ChEBI" id="CHEBI:16450"/>
        <dbReference type="ChEBI" id="CHEBI:28938"/>
        <dbReference type="EC" id="3.5.4.5"/>
    </reaction>
</comment>
<comment type="cofactor">
    <cofactor evidence="1">
        <name>Zn(2+)</name>
        <dbReference type="ChEBI" id="CHEBI:29105"/>
    </cofactor>
    <text evidence="1">Binds 1 zinc ion.</text>
</comment>
<comment type="subunit">
    <text evidence="1">Homodimer.</text>
</comment>
<comment type="similarity">
    <text evidence="1">Belongs to the cytidine and deoxycytidylate deaminase family.</text>
</comment>
<keyword id="KW-0378">Hydrolase</keyword>
<keyword id="KW-0479">Metal-binding</keyword>
<keyword id="KW-1185">Reference proteome</keyword>
<keyword id="KW-0862">Zinc</keyword>
<name>CDD_ECOL6</name>
<sequence>MHPRFQTAFAQLADNLQSALEPILADKYFPALLTGEQVSSLKSATGLDEDALAFALLPLAAACARTPLSNFNVGAIARGVSGTWYFGANMEFIGATMQQTVHAEQSAISHAWLSGEKALAAITVNYTPCGHCRQFMNELNSGLDLRIHLPGREAHALRDYLPDAFGPKDLEIKTLLMDEQDHGYALTGDALSQAAIAAANRSHMPYSKSPSGVALECKDGRIFSGSYAENAAFNPTLPPLQGALILLNLKGYDYPDIQRAVLAEKADAPLIQWDATSATLKALGCHNIDRVLLA</sequence>
<gene>
    <name evidence="1" type="primary">cdd</name>
    <name type="ordered locus">c2675</name>
</gene>